<evidence type="ECO:0000250" key="1"/>
<evidence type="ECO:0000305" key="2"/>
<feature type="chain" id="PRO_0000388394" description="Probable lysine--tRNA ligase, cytoplasmic">
    <location>
        <begin position="1"/>
        <end position="510"/>
    </location>
</feature>
<dbReference type="EC" id="6.1.1.6"/>
<dbReference type="EMBL" id="AL590444">
    <property type="protein sequence ID" value="CAD25246.2"/>
    <property type="molecule type" value="Genomic_DNA"/>
</dbReference>
<dbReference type="RefSeq" id="NP_584742.2">
    <property type="nucleotide sequence ID" value="NM_001041092.2"/>
</dbReference>
<dbReference type="SMR" id="Q8SS56"/>
<dbReference type="FunCoup" id="Q8SS56">
    <property type="interactions" value="322"/>
</dbReference>
<dbReference type="STRING" id="284813.Q8SS56"/>
<dbReference type="GeneID" id="858889"/>
<dbReference type="KEGG" id="ecu:ECU04_0580"/>
<dbReference type="VEuPathDB" id="MicrosporidiaDB:ECU04_0580"/>
<dbReference type="HOGENOM" id="CLU_008255_6_0_1"/>
<dbReference type="InParanoid" id="Q8SS56"/>
<dbReference type="OrthoDB" id="21243at2759"/>
<dbReference type="Proteomes" id="UP000000819">
    <property type="component" value="Chromosome IV"/>
</dbReference>
<dbReference type="GO" id="GO:0005829">
    <property type="term" value="C:cytosol"/>
    <property type="evidence" value="ECO:0007669"/>
    <property type="project" value="TreeGrafter"/>
</dbReference>
<dbReference type="GO" id="GO:0005524">
    <property type="term" value="F:ATP binding"/>
    <property type="evidence" value="ECO:0007669"/>
    <property type="project" value="UniProtKB-KW"/>
</dbReference>
<dbReference type="GO" id="GO:0004824">
    <property type="term" value="F:lysine-tRNA ligase activity"/>
    <property type="evidence" value="ECO:0007669"/>
    <property type="project" value="UniProtKB-EC"/>
</dbReference>
<dbReference type="GO" id="GO:0000049">
    <property type="term" value="F:tRNA binding"/>
    <property type="evidence" value="ECO:0007669"/>
    <property type="project" value="TreeGrafter"/>
</dbReference>
<dbReference type="GO" id="GO:0006430">
    <property type="term" value="P:lysyl-tRNA aminoacylation"/>
    <property type="evidence" value="ECO:0007669"/>
    <property type="project" value="InterPro"/>
</dbReference>
<dbReference type="CDD" id="cd00775">
    <property type="entry name" value="LysRS_core"/>
    <property type="match status" value="1"/>
</dbReference>
<dbReference type="CDD" id="cd04322">
    <property type="entry name" value="LysRS_N"/>
    <property type="match status" value="1"/>
</dbReference>
<dbReference type="FunFam" id="3.30.930.10:FF:000238">
    <property type="entry name" value="Lysine--tRNA ligase"/>
    <property type="match status" value="1"/>
</dbReference>
<dbReference type="Gene3D" id="3.30.930.10">
    <property type="entry name" value="Bira Bifunctional Protein, Domain 2"/>
    <property type="match status" value="1"/>
</dbReference>
<dbReference type="Gene3D" id="2.40.50.140">
    <property type="entry name" value="Nucleic acid-binding proteins"/>
    <property type="match status" value="1"/>
</dbReference>
<dbReference type="HAMAP" id="MF_00252">
    <property type="entry name" value="Lys_tRNA_synth_class2"/>
    <property type="match status" value="1"/>
</dbReference>
<dbReference type="InterPro" id="IPR004364">
    <property type="entry name" value="Aa-tRNA-synt_II"/>
</dbReference>
<dbReference type="InterPro" id="IPR006195">
    <property type="entry name" value="aa-tRNA-synth_II"/>
</dbReference>
<dbReference type="InterPro" id="IPR045864">
    <property type="entry name" value="aa-tRNA-synth_II/BPL/LPL"/>
</dbReference>
<dbReference type="InterPro" id="IPR002313">
    <property type="entry name" value="Lys-tRNA-ligase_II"/>
</dbReference>
<dbReference type="InterPro" id="IPR034762">
    <property type="entry name" value="Lys-tRNA-ligase_II_bac/euk"/>
</dbReference>
<dbReference type="InterPro" id="IPR044136">
    <property type="entry name" value="Lys-tRNA-ligase_II_N"/>
</dbReference>
<dbReference type="InterPro" id="IPR018149">
    <property type="entry name" value="Lys-tRNA-synth_II_C"/>
</dbReference>
<dbReference type="InterPro" id="IPR012340">
    <property type="entry name" value="NA-bd_OB-fold"/>
</dbReference>
<dbReference type="InterPro" id="IPR004365">
    <property type="entry name" value="NA-bd_OB_tRNA"/>
</dbReference>
<dbReference type="NCBIfam" id="TIGR00499">
    <property type="entry name" value="lysS_bact"/>
    <property type="match status" value="1"/>
</dbReference>
<dbReference type="NCBIfam" id="NF001756">
    <property type="entry name" value="PRK00484.1"/>
    <property type="match status" value="1"/>
</dbReference>
<dbReference type="PANTHER" id="PTHR42918:SF9">
    <property type="entry name" value="LYSINE--TRNA LIGASE"/>
    <property type="match status" value="1"/>
</dbReference>
<dbReference type="PANTHER" id="PTHR42918">
    <property type="entry name" value="LYSYL-TRNA SYNTHETASE"/>
    <property type="match status" value="1"/>
</dbReference>
<dbReference type="Pfam" id="PF00152">
    <property type="entry name" value="tRNA-synt_2"/>
    <property type="match status" value="1"/>
</dbReference>
<dbReference type="Pfam" id="PF01336">
    <property type="entry name" value="tRNA_anti-codon"/>
    <property type="match status" value="1"/>
</dbReference>
<dbReference type="PIRSF" id="PIRSF039101">
    <property type="entry name" value="LysRS2"/>
    <property type="match status" value="1"/>
</dbReference>
<dbReference type="PRINTS" id="PR00982">
    <property type="entry name" value="TRNASYNTHLYS"/>
</dbReference>
<dbReference type="SUPFAM" id="SSF55681">
    <property type="entry name" value="Class II aaRS and biotin synthetases"/>
    <property type="match status" value="1"/>
</dbReference>
<dbReference type="SUPFAM" id="SSF50249">
    <property type="entry name" value="Nucleic acid-binding proteins"/>
    <property type="match status" value="1"/>
</dbReference>
<dbReference type="PROSITE" id="PS50862">
    <property type="entry name" value="AA_TRNA_LIGASE_II"/>
    <property type="match status" value="1"/>
</dbReference>
<sequence>MVKHDSEVELSEEDFYMQRVSMVRKEMKEGASMYPHKFQISHSFQEILQEIEKTSTQFVGEDVVRSAGRIMSMRLHARFCFFVVTSNGESLQVVVDTKEAGREQMAKFLRRGDVVGFTGNPGRTRTLEASVFATDIIVLTPCLRTIPTEHFGLKDPETIYRKRYMDLLINRESRNRFQKRAQIIGYIRSFLDSRGFLEVETPMMNLIPGGAAAKPFITHHNELKLDLYMRVSPELYLKKLVVGGLERVYEIGKQFRNEGIDLTHNPEFTSCEFYMAYADYNDLMEMTEELISGMVENMFGTDTIVYSPKKREERTESVELSFKRPFRVISILEELNARLGLDLSGETLDREETLEKLLSACDKEGLSVEKPRTLSRVLDKLIGHVIEPQCVNPTFVKDHPIAMSPLAKNHRSKAGLTERFELFINCKEICNAYTELNNPFEQRERFLQQTQDLNAGDDEAMMNDEDFCTALEYGLPPTGGWGIGIDRLVMYLTDAANIRDVIFFPTMKPE</sequence>
<proteinExistence type="inferred from homology"/>
<comment type="catalytic activity">
    <reaction>
        <text>tRNA(Lys) + L-lysine + ATP = L-lysyl-tRNA(Lys) + AMP + diphosphate</text>
        <dbReference type="Rhea" id="RHEA:20792"/>
        <dbReference type="Rhea" id="RHEA-COMP:9696"/>
        <dbReference type="Rhea" id="RHEA-COMP:9697"/>
        <dbReference type="ChEBI" id="CHEBI:30616"/>
        <dbReference type="ChEBI" id="CHEBI:32551"/>
        <dbReference type="ChEBI" id="CHEBI:33019"/>
        <dbReference type="ChEBI" id="CHEBI:78442"/>
        <dbReference type="ChEBI" id="CHEBI:78529"/>
        <dbReference type="ChEBI" id="CHEBI:456215"/>
        <dbReference type="EC" id="6.1.1.6"/>
    </reaction>
</comment>
<comment type="subunit">
    <text evidence="1">Homodimer.</text>
</comment>
<comment type="subcellular location">
    <subcellularLocation>
        <location evidence="1">Cytoplasm</location>
    </subcellularLocation>
</comment>
<comment type="similarity">
    <text evidence="2">Belongs to the class-II aminoacyl-tRNA synthetase family.</text>
</comment>
<keyword id="KW-0030">Aminoacyl-tRNA synthetase</keyword>
<keyword id="KW-0067">ATP-binding</keyword>
<keyword id="KW-0963">Cytoplasm</keyword>
<keyword id="KW-0436">Ligase</keyword>
<keyword id="KW-0547">Nucleotide-binding</keyword>
<keyword id="KW-0648">Protein biosynthesis</keyword>
<keyword id="KW-1185">Reference proteome</keyword>
<protein>
    <recommendedName>
        <fullName>Probable lysine--tRNA ligase, cytoplasmic</fullName>
        <ecNumber>6.1.1.6</ecNumber>
    </recommendedName>
    <alternativeName>
        <fullName>Lysyl-tRNA synthetase</fullName>
        <shortName>LysRS</shortName>
    </alternativeName>
</protein>
<name>SYKC_ENCCU</name>
<gene>
    <name type="ordered locus">ECU04_0580</name>
</gene>
<accession>Q8SS56</accession>
<reference key="1">
    <citation type="journal article" date="2001" name="Nature">
        <title>Genome sequence and gene compaction of the eukaryote parasite Encephalitozoon cuniculi.</title>
        <authorList>
            <person name="Katinka M.D."/>
            <person name="Duprat S."/>
            <person name="Cornillot E."/>
            <person name="Metenier G."/>
            <person name="Thomarat F."/>
            <person name="Prensier G."/>
            <person name="Barbe V."/>
            <person name="Peyretaillade E."/>
            <person name="Brottier P."/>
            <person name="Wincker P."/>
            <person name="Delbac F."/>
            <person name="El Alaoui H."/>
            <person name="Peyret P."/>
            <person name="Saurin W."/>
            <person name="Gouy M."/>
            <person name="Weissenbach J."/>
            <person name="Vivares C.P."/>
        </authorList>
    </citation>
    <scope>NUCLEOTIDE SEQUENCE [LARGE SCALE GENOMIC DNA]</scope>
    <source>
        <strain>GB-M1</strain>
    </source>
</reference>
<reference key="2">
    <citation type="journal article" date="2009" name="BMC Genomics">
        <title>Identification of transcriptional signals in Encephalitozoon cuniculi widespread among Microsporidia phylum: support for accurate structural genome annotation.</title>
        <authorList>
            <person name="Peyretaillade E."/>
            <person name="Goncalves O."/>
            <person name="Terrat S."/>
            <person name="Dugat-Bony E."/>
            <person name="Wincker P."/>
            <person name="Cornman R.S."/>
            <person name="Evans J.D."/>
            <person name="Delbac F."/>
            <person name="Peyret P."/>
        </authorList>
    </citation>
    <scope>GENOME REANNOTATION</scope>
    <source>
        <strain>GB-M1</strain>
    </source>
</reference>
<organism>
    <name type="scientific">Encephalitozoon cuniculi (strain GB-M1)</name>
    <name type="common">Microsporidian parasite</name>
    <dbReference type="NCBI Taxonomy" id="284813"/>
    <lineage>
        <taxon>Eukaryota</taxon>
        <taxon>Fungi</taxon>
        <taxon>Fungi incertae sedis</taxon>
        <taxon>Microsporidia</taxon>
        <taxon>Unikaryonidae</taxon>
        <taxon>Encephalitozoon</taxon>
    </lineage>
</organism>